<comment type="function">
    <text evidence="1">Part of the ATP-binding cassette (ABC) transport system MtsABC involved in iron import. Binds iron with high affinity and specificity and delivers it to the membrane permease for translocation into the cytoplasm. Has low affinity for Zn(2+) and Cu(2+).</text>
</comment>
<comment type="subcellular location">
    <subcellularLocation>
        <location evidence="2">Cell membrane</location>
        <topology evidence="2">Lipid-anchor</topology>
    </subcellularLocation>
</comment>
<comment type="similarity">
    <text evidence="3">Belongs to the bacterial solute-binding protein 9 family. Lipoprotein receptor antigen (Lrai) subfamily.</text>
</comment>
<comment type="sequence caution" evidence="3">
    <conflict type="erroneous initiation">
        <sequence resource="EMBL-CDS" id="AAT86527"/>
    </conflict>
</comment>
<feature type="signal peptide" evidence="2">
    <location>
        <begin position="1"/>
        <end position="20"/>
    </location>
</feature>
<feature type="chain" id="PRO_0000031896" description="Iron ABC transporter substrate-binding lipoprotein MtsA">
    <location>
        <begin position="21"/>
        <end position="310"/>
    </location>
</feature>
<feature type="binding site" evidence="1">
    <location>
        <position position="68"/>
    </location>
    <ligand>
        <name>Fe(2+)</name>
        <dbReference type="ChEBI" id="CHEBI:29033"/>
    </ligand>
</feature>
<feature type="binding site" evidence="1">
    <location>
        <position position="140"/>
    </location>
    <ligand>
        <name>Fe(2+)</name>
        <dbReference type="ChEBI" id="CHEBI:29033"/>
    </ligand>
</feature>
<feature type="binding site" evidence="1">
    <location>
        <position position="206"/>
    </location>
    <ligand>
        <name>Fe(2+)</name>
        <dbReference type="ChEBI" id="CHEBI:29033"/>
    </ligand>
</feature>
<feature type="binding site" evidence="1">
    <location>
        <position position="281"/>
    </location>
    <ligand>
        <name>Fe(2+)</name>
        <dbReference type="ChEBI" id="CHEBI:29033"/>
    </ligand>
</feature>
<feature type="lipid moiety-binding region" description="N-palmitoyl cysteine" evidence="2">
    <location>
        <position position="21"/>
    </location>
</feature>
<feature type="lipid moiety-binding region" description="S-diacylglycerol cysteine" evidence="2">
    <location>
        <position position="21"/>
    </location>
</feature>
<gene>
    <name type="primary">mtsA</name>
    <name type="ordered locus">M6_Spy0392</name>
</gene>
<dbReference type="EMBL" id="CP000003">
    <property type="protein sequence ID" value="AAT86527.1"/>
    <property type="status" value="ALT_INIT"/>
    <property type="molecule type" value="Genomic_DNA"/>
</dbReference>
<dbReference type="RefSeq" id="WP_011017446.1">
    <property type="nucleotide sequence ID" value="NC_006086.1"/>
</dbReference>
<dbReference type="SMR" id="Q5XDI6"/>
<dbReference type="KEGG" id="spa:M6_Spy0392"/>
<dbReference type="HOGENOM" id="CLU_016838_1_1_9"/>
<dbReference type="Proteomes" id="UP000001167">
    <property type="component" value="Chromosome"/>
</dbReference>
<dbReference type="GO" id="GO:0005886">
    <property type="term" value="C:plasma membrane"/>
    <property type="evidence" value="ECO:0007669"/>
    <property type="project" value="UniProtKB-SubCell"/>
</dbReference>
<dbReference type="GO" id="GO:0046872">
    <property type="term" value="F:metal ion binding"/>
    <property type="evidence" value="ECO:0007669"/>
    <property type="project" value="UniProtKB-KW"/>
</dbReference>
<dbReference type="GO" id="GO:0007155">
    <property type="term" value="P:cell adhesion"/>
    <property type="evidence" value="ECO:0007669"/>
    <property type="project" value="InterPro"/>
</dbReference>
<dbReference type="GO" id="GO:0006826">
    <property type="term" value="P:iron ion transport"/>
    <property type="evidence" value="ECO:0007669"/>
    <property type="project" value="UniProtKB-KW"/>
</dbReference>
<dbReference type="CDD" id="cd01137">
    <property type="entry name" value="PsaA"/>
    <property type="match status" value="1"/>
</dbReference>
<dbReference type="Gene3D" id="3.40.50.1980">
    <property type="entry name" value="Nitrogenase molybdenum iron protein domain"/>
    <property type="match status" value="2"/>
</dbReference>
<dbReference type="InterPro" id="IPR006129">
    <property type="entry name" value="AdhesinB"/>
</dbReference>
<dbReference type="InterPro" id="IPR050492">
    <property type="entry name" value="Bact_metal-bind_prot9"/>
</dbReference>
<dbReference type="InterPro" id="IPR006128">
    <property type="entry name" value="Lipoprotein_PsaA-like"/>
</dbReference>
<dbReference type="InterPro" id="IPR006127">
    <property type="entry name" value="ZnuA-like"/>
</dbReference>
<dbReference type="NCBIfam" id="NF040928">
    <property type="entry name" value="ABC_lipo_SloC"/>
    <property type="match status" value="1"/>
</dbReference>
<dbReference type="PANTHER" id="PTHR42953">
    <property type="entry name" value="HIGH-AFFINITY ZINC UPTAKE SYSTEM PROTEIN ZNUA-RELATED"/>
    <property type="match status" value="1"/>
</dbReference>
<dbReference type="PANTHER" id="PTHR42953:SF1">
    <property type="entry name" value="METAL-BINDING PROTEIN HI_0362-RELATED"/>
    <property type="match status" value="1"/>
</dbReference>
<dbReference type="Pfam" id="PF01297">
    <property type="entry name" value="ZnuA"/>
    <property type="match status" value="1"/>
</dbReference>
<dbReference type="PRINTS" id="PR00691">
    <property type="entry name" value="ADHESINB"/>
</dbReference>
<dbReference type="PRINTS" id="PR00690">
    <property type="entry name" value="ADHESNFAMILY"/>
</dbReference>
<dbReference type="SUPFAM" id="SSF53807">
    <property type="entry name" value="Helical backbone' metal receptor"/>
    <property type="match status" value="1"/>
</dbReference>
<dbReference type="PROSITE" id="PS51257">
    <property type="entry name" value="PROKAR_LIPOPROTEIN"/>
    <property type="match status" value="1"/>
</dbReference>
<keyword id="KW-1003">Cell membrane</keyword>
<keyword id="KW-0406">Ion transport</keyword>
<keyword id="KW-0408">Iron</keyword>
<keyword id="KW-0410">Iron transport</keyword>
<keyword id="KW-0449">Lipoprotein</keyword>
<keyword id="KW-0472">Membrane</keyword>
<keyword id="KW-0479">Metal-binding</keyword>
<keyword id="KW-0564">Palmitate</keyword>
<keyword id="KW-0732">Signal</keyword>
<keyword id="KW-0813">Transport</keyword>
<organism>
    <name type="scientific">Streptococcus pyogenes serotype M6 (strain ATCC BAA-946 / MGAS10394)</name>
    <dbReference type="NCBI Taxonomy" id="286636"/>
    <lineage>
        <taxon>Bacteria</taxon>
        <taxon>Bacillati</taxon>
        <taxon>Bacillota</taxon>
        <taxon>Bacilli</taxon>
        <taxon>Lactobacillales</taxon>
        <taxon>Streptococcaceae</taxon>
        <taxon>Streptococcus</taxon>
    </lineage>
</organism>
<accession>Q5XDI6</accession>
<evidence type="ECO:0000250" key="1">
    <source>
        <dbReference type="UniProtKB" id="P0A4G4"/>
    </source>
</evidence>
<evidence type="ECO:0000255" key="2">
    <source>
        <dbReference type="PROSITE-ProRule" id="PRU00303"/>
    </source>
</evidence>
<evidence type="ECO:0000305" key="3"/>
<name>MTSA_STRP6</name>
<proteinExistence type="inferred from homology"/>
<protein>
    <recommendedName>
        <fullName evidence="3">Iron ABC transporter substrate-binding lipoprotein MtsA</fullName>
    </recommendedName>
</protein>
<reference key="1">
    <citation type="journal article" date="2004" name="J. Infect. Dis.">
        <title>Progress toward characterization of the group A Streptococcus metagenome: complete genome sequence of a macrolide-resistant serotype M6 strain.</title>
        <authorList>
            <person name="Banks D.J."/>
            <person name="Porcella S.F."/>
            <person name="Barbian K.D."/>
            <person name="Beres S.B."/>
            <person name="Philips L.E."/>
            <person name="Voyich J.M."/>
            <person name="DeLeo F.R."/>
            <person name="Martin J.M."/>
            <person name="Somerville G.A."/>
            <person name="Musser J.M."/>
        </authorList>
    </citation>
    <scope>NUCLEOTIDE SEQUENCE [LARGE SCALE GENOMIC DNA]</scope>
    <source>
        <strain>ATCC BAA-946 / MGAS10394</strain>
    </source>
</reference>
<sequence>MGKKMSLILGAFLSVFLLVACSSTGTKTAKSDKLKVVATNSIIADMTKAIAGDKIDLHSIVPIGQDPHEYEPLPEDVEKTSNADVIFYNGINLEDGGQAWFTKLVKNAQKTKNKDYFAVSDGIDVIYLEGASEKGKEDPHAWLNLENGIIYSKNIAKQLIAKDPKNKETYEKNLKAYVAKLEKLDKEAKSKFDAIAENKKLIVTSEGCFKYFSKAYGVPSAYIWEINTEEEGTPDQISSLIEKLKVIKPSALFVESSVDRRPMETVSKDSGIPIYSEIFTDSIAKKGKPGDSYYAMMKWNLDKISEGLAK</sequence>